<feature type="chain" id="PRO_0000364077" description="Oxaloacetate decarboxylase">
    <location>
        <begin position="1"/>
        <end position="288"/>
    </location>
</feature>
<feature type="binding site" evidence="1">
    <location>
        <position position="47"/>
    </location>
    <ligand>
        <name>substrate</name>
    </ligand>
</feature>
<feature type="binding site" evidence="1">
    <location>
        <position position="85"/>
    </location>
    <ligand>
        <name>Mg(2+)</name>
        <dbReference type="ChEBI" id="CHEBI:18420"/>
    </ligand>
</feature>
<feature type="binding site" evidence="1">
    <location>
        <position position="156"/>
    </location>
    <ligand>
        <name>substrate</name>
    </ligand>
</feature>
<feature type="binding site" evidence="1">
    <location>
        <position position="232"/>
    </location>
    <ligand>
        <name>substrate</name>
    </ligand>
</feature>
<evidence type="ECO:0000255" key="1">
    <source>
        <dbReference type="HAMAP-Rule" id="MF_01299"/>
    </source>
</evidence>
<evidence type="ECO:0000305" key="2"/>
<name>OADC_RHOPB</name>
<protein>
    <recommendedName>
        <fullName evidence="1">Oxaloacetate decarboxylase</fullName>
        <ecNumber evidence="1">4.1.1.112</ecNumber>
    </recommendedName>
</protein>
<proteinExistence type="inferred from homology"/>
<accession>Q211P3</accession>
<reference key="1">
    <citation type="submission" date="2006-03" db="EMBL/GenBank/DDBJ databases">
        <title>Complete sequence of Rhodopseudomonas palustris BisB18.</title>
        <authorList>
            <consortium name="US DOE Joint Genome Institute"/>
            <person name="Copeland A."/>
            <person name="Lucas S."/>
            <person name="Lapidus A."/>
            <person name="Barry K."/>
            <person name="Detter J.C."/>
            <person name="Glavina del Rio T."/>
            <person name="Hammon N."/>
            <person name="Israni S."/>
            <person name="Dalin E."/>
            <person name="Tice H."/>
            <person name="Pitluck S."/>
            <person name="Chain P."/>
            <person name="Malfatti S."/>
            <person name="Shin M."/>
            <person name="Vergez L."/>
            <person name="Schmutz J."/>
            <person name="Larimer F."/>
            <person name="Land M."/>
            <person name="Hauser L."/>
            <person name="Pelletier D.A."/>
            <person name="Kyrpides N."/>
            <person name="Anderson I."/>
            <person name="Oda Y."/>
            <person name="Harwood C.S."/>
            <person name="Richardson P."/>
        </authorList>
    </citation>
    <scope>NUCLEOTIDE SEQUENCE [LARGE SCALE GENOMIC DNA]</scope>
    <source>
        <strain>BisB18</strain>
    </source>
</reference>
<gene>
    <name type="ordered locus">RPC_3351</name>
</gene>
<comment type="function">
    <text evidence="1">Catalyzes the decarboxylation of oxaloacetate into pyruvate. Seems to play a role in maintaining cellular concentrations of bicarbonate and pyruvate.</text>
</comment>
<comment type="catalytic activity">
    <reaction evidence="1">
        <text>oxaloacetate + H(+) = pyruvate + CO2</text>
        <dbReference type="Rhea" id="RHEA:15641"/>
        <dbReference type="ChEBI" id="CHEBI:15361"/>
        <dbReference type="ChEBI" id="CHEBI:15378"/>
        <dbReference type="ChEBI" id="CHEBI:16452"/>
        <dbReference type="ChEBI" id="CHEBI:16526"/>
        <dbReference type="EC" id="4.1.1.112"/>
    </reaction>
</comment>
<comment type="cofactor">
    <cofactor evidence="1">
        <name>Mg(2+)</name>
        <dbReference type="ChEBI" id="CHEBI:18420"/>
    </cofactor>
    <text evidence="1">Binds 1 Mg(2+) ion per subunit.</text>
</comment>
<comment type="subunit">
    <text evidence="1">Homotetramer; dimer of dimers.</text>
</comment>
<comment type="similarity">
    <text evidence="2">Belongs to the isocitrate lyase/PEP mutase superfamily. Oxaloacetate decarboxylase family.</text>
</comment>
<dbReference type="EC" id="4.1.1.112" evidence="1"/>
<dbReference type="EMBL" id="CP000301">
    <property type="protein sequence ID" value="ABD88893.1"/>
    <property type="molecule type" value="Genomic_DNA"/>
</dbReference>
<dbReference type="SMR" id="Q211P3"/>
<dbReference type="STRING" id="316056.RPC_3351"/>
<dbReference type="KEGG" id="rpc:RPC_3351"/>
<dbReference type="eggNOG" id="COG2513">
    <property type="taxonomic scope" value="Bacteria"/>
</dbReference>
<dbReference type="HOGENOM" id="CLU_027389_3_2_5"/>
<dbReference type="OrthoDB" id="9771433at2"/>
<dbReference type="GO" id="GO:0000287">
    <property type="term" value="F:magnesium ion binding"/>
    <property type="evidence" value="ECO:0007669"/>
    <property type="project" value="UniProtKB-UniRule"/>
</dbReference>
<dbReference type="GO" id="GO:0046421">
    <property type="term" value="F:methylisocitrate lyase activity"/>
    <property type="evidence" value="ECO:0007669"/>
    <property type="project" value="TreeGrafter"/>
</dbReference>
<dbReference type="GO" id="GO:0008948">
    <property type="term" value="F:oxaloacetate decarboxylase activity"/>
    <property type="evidence" value="ECO:0007669"/>
    <property type="project" value="UniProtKB-UniRule"/>
</dbReference>
<dbReference type="GO" id="GO:0006107">
    <property type="term" value="P:oxaloacetate metabolic process"/>
    <property type="evidence" value="ECO:0007669"/>
    <property type="project" value="UniProtKB-UniRule"/>
</dbReference>
<dbReference type="GO" id="GO:0019629">
    <property type="term" value="P:propionate catabolic process, 2-methylcitrate cycle"/>
    <property type="evidence" value="ECO:0007669"/>
    <property type="project" value="TreeGrafter"/>
</dbReference>
<dbReference type="GO" id="GO:0042866">
    <property type="term" value="P:pyruvate biosynthetic process"/>
    <property type="evidence" value="ECO:0007669"/>
    <property type="project" value="UniProtKB-UniRule"/>
</dbReference>
<dbReference type="CDD" id="cd00377">
    <property type="entry name" value="ICL_PEPM"/>
    <property type="match status" value="1"/>
</dbReference>
<dbReference type="Gene3D" id="3.20.20.60">
    <property type="entry name" value="Phosphoenolpyruvate-binding domains"/>
    <property type="match status" value="1"/>
</dbReference>
<dbReference type="HAMAP" id="MF_01299">
    <property type="entry name" value="OadC"/>
    <property type="match status" value="1"/>
</dbReference>
<dbReference type="InterPro" id="IPR039556">
    <property type="entry name" value="ICL/PEPM"/>
</dbReference>
<dbReference type="InterPro" id="IPR023687">
    <property type="entry name" value="Oxaloacetate_deCOase_bac"/>
</dbReference>
<dbReference type="InterPro" id="IPR015813">
    <property type="entry name" value="Pyrv/PenolPyrv_kinase-like_dom"/>
</dbReference>
<dbReference type="InterPro" id="IPR040442">
    <property type="entry name" value="Pyrv_kinase-like_dom_sf"/>
</dbReference>
<dbReference type="PANTHER" id="PTHR42905:SF3">
    <property type="entry name" value="OXALOACETATE DECARBOXYLASE"/>
    <property type="match status" value="1"/>
</dbReference>
<dbReference type="PANTHER" id="PTHR42905">
    <property type="entry name" value="PHOSPHOENOLPYRUVATE CARBOXYLASE"/>
    <property type="match status" value="1"/>
</dbReference>
<dbReference type="Pfam" id="PF13714">
    <property type="entry name" value="PEP_mutase"/>
    <property type="match status" value="1"/>
</dbReference>
<dbReference type="SUPFAM" id="SSF51621">
    <property type="entry name" value="Phosphoenolpyruvate/pyruvate domain"/>
    <property type="match status" value="1"/>
</dbReference>
<keyword id="KW-0210">Decarboxylase</keyword>
<keyword id="KW-0456">Lyase</keyword>
<keyword id="KW-0460">Magnesium</keyword>
<keyword id="KW-0479">Metal-binding</keyword>
<organism>
    <name type="scientific">Rhodopseudomonas palustris (strain BisB18)</name>
    <dbReference type="NCBI Taxonomy" id="316056"/>
    <lineage>
        <taxon>Bacteria</taxon>
        <taxon>Pseudomonadati</taxon>
        <taxon>Pseudomonadota</taxon>
        <taxon>Alphaproteobacteria</taxon>
        <taxon>Hyphomicrobiales</taxon>
        <taxon>Nitrobacteraceae</taxon>
        <taxon>Rhodopseudomonas</taxon>
    </lineage>
</organism>
<sequence length="288" mass="30258">MTWRSRREALRAILSGSRCARPASVFDPISMRIAEDLGFEVGMFGGSVASLAILGDPDIALITLTELAEQVRRMSRAAALPILVDADHGYGNALNVRRTVQELEGAGAAGLTIEDTALPQPFGEATPQLIAIEEGFGKIKAALDARGDPTLVIVGRTGALAITSLEDAIERAQAYEAAGVDALFFTAVKTRAQLEAIAAATTLPIVLGGPSEEISDWDYLAAQRVRIAVQGHAPIAAATQAVFDTLKAAAAGTPPMQLQGLASSELMDWVTRAALVKQRGANFLGLKK</sequence>